<comment type="function">
    <text evidence="1">The glycine cleavage system catalyzes the degradation of glycine. The H protein shuttles the methylamine group of glycine from the P protein to the T protein.</text>
</comment>
<comment type="cofactor">
    <cofactor evidence="1">
        <name>(R)-lipoate</name>
        <dbReference type="ChEBI" id="CHEBI:83088"/>
    </cofactor>
    <text evidence="1">Binds 1 lipoyl cofactor covalently.</text>
</comment>
<comment type="subunit">
    <text evidence="1">The glycine cleavage system is composed of four proteins: P, T, L and H.</text>
</comment>
<comment type="similarity">
    <text evidence="1">Belongs to the GcvH family.</text>
</comment>
<accession>B8D1D6</accession>
<sequence>MNVPENLMYTKNHEWIKVDGDTALVGVTDYAQKELGDIVFVELPEVSDEFAQSEGFAVLESVKAVSDVYLPVGGEVLEANEELLENPELVNQEPYASGWLVKIKLADKKELEDLMSSEEYARYLEEVE</sequence>
<reference key="1">
    <citation type="journal article" date="2009" name="PLoS ONE">
        <title>Genome analysis of the anaerobic thermohalophilic bacterium Halothermothrix orenii.</title>
        <authorList>
            <person name="Mavromatis K."/>
            <person name="Ivanova N."/>
            <person name="Anderson I."/>
            <person name="Lykidis A."/>
            <person name="Hooper S.D."/>
            <person name="Sun H."/>
            <person name="Kunin V."/>
            <person name="Lapidus A."/>
            <person name="Hugenholtz P."/>
            <person name="Patel B."/>
            <person name="Kyrpides N.C."/>
        </authorList>
    </citation>
    <scope>NUCLEOTIDE SEQUENCE [LARGE SCALE GENOMIC DNA]</scope>
    <source>
        <strain>H 168 / OCM 544 / DSM 9562</strain>
    </source>
</reference>
<feature type="chain" id="PRO_1000132421" description="Glycine cleavage system H protein">
    <location>
        <begin position="1"/>
        <end position="128"/>
    </location>
</feature>
<feature type="domain" description="Lipoyl-binding" evidence="2">
    <location>
        <begin position="22"/>
        <end position="104"/>
    </location>
</feature>
<feature type="modified residue" description="N6-lipoyllysine" evidence="1">
    <location>
        <position position="63"/>
    </location>
</feature>
<dbReference type="EMBL" id="CP001098">
    <property type="protein sequence ID" value="ACL71088.1"/>
    <property type="molecule type" value="Genomic_DNA"/>
</dbReference>
<dbReference type="RefSeq" id="WP_015924056.1">
    <property type="nucleotide sequence ID" value="NC_011899.1"/>
</dbReference>
<dbReference type="SMR" id="B8D1D6"/>
<dbReference type="STRING" id="373903.Hore_23430"/>
<dbReference type="KEGG" id="hor:Hore_23430"/>
<dbReference type="eggNOG" id="COG0509">
    <property type="taxonomic scope" value="Bacteria"/>
</dbReference>
<dbReference type="HOGENOM" id="CLU_097408_2_0_9"/>
<dbReference type="OrthoDB" id="9796712at2"/>
<dbReference type="Proteomes" id="UP000000719">
    <property type="component" value="Chromosome"/>
</dbReference>
<dbReference type="GO" id="GO:0005737">
    <property type="term" value="C:cytoplasm"/>
    <property type="evidence" value="ECO:0007669"/>
    <property type="project" value="TreeGrafter"/>
</dbReference>
<dbReference type="GO" id="GO:0005960">
    <property type="term" value="C:glycine cleavage complex"/>
    <property type="evidence" value="ECO:0007669"/>
    <property type="project" value="InterPro"/>
</dbReference>
<dbReference type="GO" id="GO:0019464">
    <property type="term" value="P:glycine decarboxylation via glycine cleavage system"/>
    <property type="evidence" value="ECO:0007669"/>
    <property type="project" value="UniProtKB-UniRule"/>
</dbReference>
<dbReference type="CDD" id="cd06848">
    <property type="entry name" value="GCS_H"/>
    <property type="match status" value="1"/>
</dbReference>
<dbReference type="Gene3D" id="2.40.50.100">
    <property type="match status" value="1"/>
</dbReference>
<dbReference type="HAMAP" id="MF_00272">
    <property type="entry name" value="GcvH"/>
    <property type="match status" value="1"/>
</dbReference>
<dbReference type="InterPro" id="IPR000089">
    <property type="entry name" value="Biotin_lipoyl"/>
</dbReference>
<dbReference type="InterPro" id="IPR002930">
    <property type="entry name" value="GCV_H"/>
</dbReference>
<dbReference type="InterPro" id="IPR033753">
    <property type="entry name" value="GCV_H/Fam206"/>
</dbReference>
<dbReference type="InterPro" id="IPR017453">
    <property type="entry name" value="GCV_H_sub"/>
</dbReference>
<dbReference type="InterPro" id="IPR011053">
    <property type="entry name" value="Single_hybrid_motif"/>
</dbReference>
<dbReference type="NCBIfam" id="TIGR00527">
    <property type="entry name" value="gcvH"/>
    <property type="match status" value="1"/>
</dbReference>
<dbReference type="NCBIfam" id="NF002270">
    <property type="entry name" value="PRK01202.1"/>
    <property type="match status" value="1"/>
</dbReference>
<dbReference type="PANTHER" id="PTHR11715">
    <property type="entry name" value="GLYCINE CLEAVAGE SYSTEM H PROTEIN"/>
    <property type="match status" value="1"/>
</dbReference>
<dbReference type="PANTHER" id="PTHR11715:SF3">
    <property type="entry name" value="GLYCINE CLEAVAGE SYSTEM H PROTEIN-RELATED"/>
    <property type="match status" value="1"/>
</dbReference>
<dbReference type="Pfam" id="PF01597">
    <property type="entry name" value="GCV_H"/>
    <property type="match status" value="1"/>
</dbReference>
<dbReference type="SUPFAM" id="SSF51230">
    <property type="entry name" value="Single hybrid motif"/>
    <property type="match status" value="1"/>
</dbReference>
<dbReference type="PROSITE" id="PS50968">
    <property type="entry name" value="BIOTINYL_LIPOYL"/>
    <property type="match status" value="1"/>
</dbReference>
<proteinExistence type="inferred from homology"/>
<organism>
    <name type="scientific">Halothermothrix orenii (strain H 168 / OCM 544 / DSM 9562)</name>
    <dbReference type="NCBI Taxonomy" id="373903"/>
    <lineage>
        <taxon>Bacteria</taxon>
        <taxon>Bacillati</taxon>
        <taxon>Bacillota</taxon>
        <taxon>Clostridia</taxon>
        <taxon>Halanaerobiales</taxon>
        <taxon>Halothermotrichaceae</taxon>
        <taxon>Halothermothrix</taxon>
    </lineage>
</organism>
<evidence type="ECO:0000255" key="1">
    <source>
        <dbReference type="HAMAP-Rule" id="MF_00272"/>
    </source>
</evidence>
<evidence type="ECO:0000255" key="2">
    <source>
        <dbReference type="PROSITE-ProRule" id="PRU01066"/>
    </source>
</evidence>
<protein>
    <recommendedName>
        <fullName evidence="1">Glycine cleavage system H protein</fullName>
    </recommendedName>
</protein>
<name>GCSH_HALOH</name>
<gene>
    <name evidence="1" type="primary">gcvH</name>
    <name type="ordered locus">Hore_23430</name>
</gene>
<keyword id="KW-0450">Lipoyl</keyword>
<keyword id="KW-1185">Reference proteome</keyword>